<accession>Q6D262</accession>
<organism>
    <name type="scientific">Pectobacterium atrosepticum (strain SCRI 1043 / ATCC BAA-672)</name>
    <name type="common">Erwinia carotovora subsp. atroseptica</name>
    <dbReference type="NCBI Taxonomy" id="218491"/>
    <lineage>
        <taxon>Bacteria</taxon>
        <taxon>Pseudomonadati</taxon>
        <taxon>Pseudomonadota</taxon>
        <taxon>Gammaproteobacteria</taxon>
        <taxon>Enterobacterales</taxon>
        <taxon>Pectobacteriaceae</taxon>
        <taxon>Pectobacterium</taxon>
    </lineage>
</organism>
<reference key="1">
    <citation type="journal article" date="2004" name="Proc. Natl. Acad. Sci. U.S.A.">
        <title>Genome sequence of the enterobacterial phytopathogen Erwinia carotovora subsp. atroseptica and characterization of virulence factors.</title>
        <authorList>
            <person name="Bell K.S."/>
            <person name="Sebaihia M."/>
            <person name="Pritchard L."/>
            <person name="Holden M.T.G."/>
            <person name="Hyman L.J."/>
            <person name="Holeva M.C."/>
            <person name="Thomson N.R."/>
            <person name="Bentley S.D."/>
            <person name="Churcher L.J.C."/>
            <person name="Mungall K."/>
            <person name="Atkin R."/>
            <person name="Bason N."/>
            <person name="Brooks K."/>
            <person name="Chillingworth T."/>
            <person name="Clark K."/>
            <person name="Doggett J."/>
            <person name="Fraser A."/>
            <person name="Hance Z."/>
            <person name="Hauser H."/>
            <person name="Jagels K."/>
            <person name="Moule S."/>
            <person name="Norbertczak H."/>
            <person name="Ormond D."/>
            <person name="Price C."/>
            <person name="Quail M.A."/>
            <person name="Sanders M."/>
            <person name="Walker D."/>
            <person name="Whitehead S."/>
            <person name="Salmond G.P.C."/>
            <person name="Birch P.R.J."/>
            <person name="Parkhill J."/>
            <person name="Toth I.K."/>
        </authorList>
    </citation>
    <scope>NUCLEOTIDE SEQUENCE [LARGE SCALE GENOMIC DNA]</scope>
    <source>
        <strain>SCRI 1043 / ATCC BAA-672</strain>
    </source>
</reference>
<protein>
    <recommendedName>
        <fullName evidence="1">Co-chaperone protein HscB</fullName>
    </recommendedName>
    <alternativeName>
        <fullName evidence="1">Hsc20</fullName>
    </alternativeName>
</protein>
<sequence>MDYFTLFGLPIRYDVDGGLLASRFQDLQRQFHPDRYATSPECERMLAVQLAATINNAYQALKHPLKRAEYMLSLHGFDVNNEQHTMRDTAFLMEQLELREELDTISQRSDADEVLTTFAERLQVMIGTRRSHMRHELDNETWTDAADTVRKLRFLDKLQQQVEELEEQLLDR</sequence>
<evidence type="ECO:0000255" key="1">
    <source>
        <dbReference type="HAMAP-Rule" id="MF_00682"/>
    </source>
</evidence>
<feature type="chain" id="PRO_0000070969" description="Co-chaperone protein HscB">
    <location>
        <begin position="1"/>
        <end position="172"/>
    </location>
</feature>
<feature type="domain" description="J" evidence="1">
    <location>
        <begin position="2"/>
        <end position="74"/>
    </location>
</feature>
<dbReference type="EMBL" id="BX950851">
    <property type="protein sequence ID" value="CAG76132.1"/>
    <property type="molecule type" value="Genomic_DNA"/>
</dbReference>
<dbReference type="RefSeq" id="WP_011094755.1">
    <property type="nucleotide sequence ID" value="NC_004547.2"/>
</dbReference>
<dbReference type="SMR" id="Q6D262"/>
<dbReference type="STRING" id="218491.ECA3234"/>
<dbReference type="KEGG" id="eca:ECA3234"/>
<dbReference type="PATRIC" id="fig|218491.5.peg.3276"/>
<dbReference type="eggNOG" id="COG1076">
    <property type="taxonomic scope" value="Bacteria"/>
</dbReference>
<dbReference type="HOGENOM" id="CLU_068529_2_0_6"/>
<dbReference type="OrthoDB" id="287587at2"/>
<dbReference type="Proteomes" id="UP000007966">
    <property type="component" value="Chromosome"/>
</dbReference>
<dbReference type="GO" id="GO:1990230">
    <property type="term" value="C:iron-sulfur cluster transfer complex"/>
    <property type="evidence" value="ECO:0007669"/>
    <property type="project" value="TreeGrafter"/>
</dbReference>
<dbReference type="GO" id="GO:0001671">
    <property type="term" value="F:ATPase activator activity"/>
    <property type="evidence" value="ECO:0007669"/>
    <property type="project" value="InterPro"/>
</dbReference>
<dbReference type="GO" id="GO:0051087">
    <property type="term" value="F:protein-folding chaperone binding"/>
    <property type="evidence" value="ECO:0007669"/>
    <property type="project" value="InterPro"/>
</dbReference>
<dbReference type="GO" id="GO:0044571">
    <property type="term" value="P:[2Fe-2S] cluster assembly"/>
    <property type="evidence" value="ECO:0007669"/>
    <property type="project" value="InterPro"/>
</dbReference>
<dbReference type="GO" id="GO:0051259">
    <property type="term" value="P:protein complex oligomerization"/>
    <property type="evidence" value="ECO:0007669"/>
    <property type="project" value="InterPro"/>
</dbReference>
<dbReference type="GO" id="GO:0006457">
    <property type="term" value="P:protein folding"/>
    <property type="evidence" value="ECO:0007669"/>
    <property type="project" value="UniProtKB-UniRule"/>
</dbReference>
<dbReference type="CDD" id="cd06257">
    <property type="entry name" value="DnaJ"/>
    <property type="match status" value="1"/>
</dbReference>
<dbReference type="Gene3D" id="1.10.287.110">
    <property type="entry name" value="DnaJ domain"/>
    <property type="match status" value="1"/>
</dbReference>
<dbReference type="Gene3D" id="1.20.1280.20">
    <property type="entry name" value="HscB, C-terminal domain"/>
    <property type="match status" value="1"/>
</dbReference>
<dbReference type="HAMAP" id="MF_00682">
    <property type="entry name" value="HscB"/>
    <property type="match status" value="1"/>
</dbReference>
<dbReference type="InterPro" id="IPR001623">
    <property type="entry name" value="DnaJ_domain"/>
</dbReference>
<dbReference type="InterPro" id="IPR004640">
    <property type="entry name" value="HscB"/>
</dbReference>
<dbReference type="InterPro" id="IPR036386">
    <property type="entry name" value="HscB_C_sf"/>
</dbReference>
<dbReference type="InterPro" id="IPR009073">
    <property type="entry name" value="HscB_oligo_C"/>
</dbReference>
<dbReference type="InterPro" id="IPR036869">
    <property type="entry name" value="J_dom_sf"/>
</dbReference>
<dbReference type="NCBIfam" id="TIGR00714">
    <property type="entry name" value="hscB"/>
    <property type="match status" value="1"/>
</dbReference>
<dbReference type="NCBIfam" id="NF003449">
    <property type="entry name" value="PRK05014.1"/>
    <property type="match status" value="1"/>
</dbReference>
<dbReference type="PANTHER" id="PTHR14021">
    <property type="entry name" value="IRON-SULFUR CLUSTER CO-CHAPERONE PROTEIN HSCB"/>
    <property type="match status" value="1"/>
</dbReference>
<dbReference type="PANTHER" id="PTHR14021:SF15">
    <property type="entry name" value="IRON-SULFUR CLUSTER CO-CHAPERONE PROTEIN HSCB"/>
    <property type="match status" value="1"/>
</dbReference>
<dbReference type="Pfam" id="PF07743">
    <property type="entry name" value="HSCB_C"/>
    <property type="match status" value="1"/>
</dbReference>
<dbReference type="SMART" id="SM00271">
    <property type="entry name" value="DnaJ"/>
    <property type="match status" value="1"/>
</dbReference>
<dbReference type="SUPFAM" id="SSF46565">
    <property type="entry name" value="Chaperone J-domain"/>
    <property type="match status" value="1"/>
</dbReference>
<dbReference type="SUPFAM" id="SSF47144">
    <property type="entry name" value="HSC20 (HSCB), C-terminal oligomerisation domain"/>
    <property type="match status" value="1"/>
</dbReference>
<dbReference type="PROSITE" id="PS50076">
    <property type="entry name" value="DNAJ_2"/>
    <property type="match status" value="1"/>
</dbReference>
<proteinExistence type="inferred from homology"/>
<name>HSCB_PECAS</name>
<keyword id="KW-0143">Chaperone</keyword>
<keyword id="KW-1185">Reference proteome</keyword>
<gene>
    <name evidence="1" type="primary">hscB</name>
    <name type="ordered locus">ECA3234</name>
</gene>
<comment type="function">
    <text evidence="1">Co-chaperone involved in the maturation of iron-sulfur cluster-containing proteins. Seems to help targeting proteins to be folded toward HscA.</text>
</comment>
<comment type="subunit">
    <text evidence="1">Interacts with HscA and stimulates its ATPase activity. Interacts with IscU.</text>
</comment>
<comment type="similarity">
    <text evidence="1">Belongs to the HscB family.</text>
</comment>